<protein>
    <recommendedName>
        <fullName evidence="1">3-hydroxyacyl-[acyl-carrier-protein] dehydratase FabZ</fullName>
        <ecNumber evidence="1">4.2.1.59</ecNumber>
    </recommendedName>
    <alternativeName>
        <fullName evidence="1">(3R)-hydroxymyristoyl-[acyl-carrier-protein] dehydratase</fullName>
        <shortName evidence="1">(3R)-hydroxymyristoyl-ACP dehydrase</shortName>
    </alternativeName>
    <alternativeName>
        <fullName evidence="1">Beta-hydroxyacyl-ACP dehydratase</fullName>
    </alternativeName>
</protein>
<reference key="1">
    <citation type="journal article" date="2003" name="Proc. Natl. Acad. Sci. U.S.A.">
        <title>Complete genome sequence and analysis of Wolinella succinogenes.</title>
        <authorList>
            <person name="Baar C."/>
            <person name="Eppinger M."/>
            <person name="Raddatz G."/>
            <person name="Simon J."/>
            <person name="Lanz C."/>
            <person name="Klimmek O."/>
            <person name="Nandakumar R."/>
            <person name="Gross R."/>
            <person name="Rosinus A."/>
            <person name="Keller H."/>
            <person name="Jagtap P."/>
            <person name="Linke B."/>
            <person name="Meyer F."/>
            <person name="Lederer H."/>
            <person name="Schuster S.C."/>
        </authorList>
    </citation>
    <scope>NUCLEOTIDE SEQUENCE [LARGE SCALE GENOMIC DNA]</scope>
    <source>
        <strain>ATCC 29543 / DSM 1740 / CCUG 13145 / JCM 31913 / LMG 7466 / NCTC 11488 / FDC 602W</strain>
    </source>
</reference>
<proteinExistence type="inferred from homology"/>
<dbReference type="EC" id="4.2.1.59" evidence="1"/>
<dbReference type="EMBL" id="BX571657">
    <property type="protein sequence ID" value="CAE09229.1"/>
    <property type="molecule type" value="Genomic_DNA"/>
</dbReference>
<dbReference type="RefSeq" id="WP_011138029.1">
    <property type="nucleotide sequence ID" value="NC_005090.1"/>
</dbReference>
<dbReference type="SMR" id="Q7MAS2"/>
<dbReference type="STRING" id="273121.WS0060"/>
<dbReference type="KEGG" id="wsu:WS0060"/>
<dbReference type="eggNOG" id="COG0764">
    <property type="taxonomic scope" value="Bacteria"/>
</dbReference>
<dbReference type="HOGENOM" id="CLU_078912_1_2_7"/>
<dbReference type="Proteomes" id="UP000000422">
    <property type="component" value="Chromosome"/>
</dbReference>
<dbReference type="GO" id="GO:0005737">
    <property type="term" value="C:cytoplasm"/>
    <property type="evidence" value="ECO:0007669"/>
    <property type="project" value="UniProtKB-SubCell"/>
</dbReference>
<dbReference type="GO" id="GO:0016020">
    <property type="term" value="C:membrane"/>
    <property type="evidence" value="ECO:0007669"/>
    <property type="project" value="GOC"/>
</dbReference>
<dbReference type="GO" id="GO:0019171">
    <property type="term" value="F:(3R)-hydroxyacyl-[acyl-carrier-protein] dehydratase activity"/>
    <property type="evidence" value="ECO:0007669"/>
    <property type="project" value="UniProtKB-EC"/>
</dbReference>
<dbReference type="GO" id="GO:0006633">
    <property type="term" value="P:fatty acid biosynthetic process"/>
    <property type="evidence" value="ECO:0007669"/>
    <property type="project" value="UniProtKB-UniRule"/>
</dbReference>
<dbReference type="GO" id="GO:0009245">
    <property type="term" value="P:lipid A biosynthetic process"/>
    <property type="evidence" value="ECO:0007669"/>
    <property type="project" value="UniProtKB-UniRule"/>
</dbReference>
<dbReference type="CDD" id="cd01288">
    <property type="entry name" value="FabZ"/>
    <property type="match status" value="1"/>
</dbReference>
<dbReference type="FunFam" id="3.10.129.10:FF:000001">
    <property type="entry name" value="3-hydroxyacyl-[acyl-carrier-protein] dehydratase FabZ"/>
    <property type="match status" value="1"/>
</dbReference>
<dbReference type="Gene3D" id="3.10.129.10">
    <property type="entry name" value="Hotdog Thioesterase"/>
    <property type="match status" value="1"/>
</dbReference>
<dbReference type="HAMAP" id="MF_00406">
    <property type="entry name" value="FabZ"/>
    <property type="match status" value="1"/>
</dbReference>
<dbReference type="InterPro" id="IPR013114">
    <property type="entry name" value="FabA_FabZ"/>
</dbReference>
<dbReference type="InterPro" id="IPR010084">
    <property type="entry name" value="FabZ"/>
</dbReference>
<dbReference type="InterPro" id="IPR029069">
    <property type="entry name" value="HotDog_dom_sf"/>
</dbReference>
<dbReference type="NCBIfam" id="TIGR01750">
    <property type="entry name" value="fabZ"/>
    <property type="match status" value="1"/>
</dbReference>
<dbReference type="NCBIfam" id="NF000582">
    <property type="entry name" value="PRK00006.1"/>
    <property type="match status" value="1"/>
</dbReference>
<dbReference type="PANTHER" id="PTHR30272">
    <property type="entry name" value="3-HYDROXYACYL-[ACYL-CARRIER-PROTEIN] DEHYDRATASE"/>
    <property type="match status" value="1"/>
</dbReference>
<dbReference type="PANTHER" id="PTHR30272:SF1">
    <property type="entry name" value="3-HYDROXYACYL-[ACYL-CARRIER-PROTEIN] DEHYDRATASE"/>
    <property type="match status" value="1"/>
</dbReference>
<dbReference type="Pfam" id="PF07977">
    <property type="entry name" value="FabA"/>
    <property type="match status" value="1"/>
</dbReference>
<dbReference type="SUPFAM" id="SSF54637">
    <property type="entry name" value="Thioesterase/thiol ester dehydrase-isomerase"/>
    <property type="match status" value="1"/>
</dbReference>
<sequence length="151" mass="17084">MLYDVQKIKEILPHRFPFLLVDRVTALTSEESIEAYKNITINEEVFQGHFPIKPVYPGVLVIEGMAQAGGVLAFVSMFGEEASNHDEKIVYFMSIDKAKFRVPVTPGDKLVYRLNVLKHKGSIWILEGRAYVDDKLVAEAELKAMVADKEK</sequence>
<comment type="function">
    <text evidence="1">Involved in unsaturated fatty acids biosynthesis. Catalyzes the dehydration of short chain beta-hydroxyacyl-ACPs and long chain saturated and unsaturated beta-hydroxyacyl-ACPs.</text>
</comment>
<comment type="catalytic activity">
    <reaction evidence="1">
        <text>a (3R)-hydroxyacyl-[ACP] = a (2E)-enoyl-[ACP] + H2O</text>
        <dbReference type="Rhea" id="RHEA:13097"/>
        <dbReference type="Rhea" id="RHEA-COMP:9925"/>
        <dbReference type="Rhea" id="RHEA-COMP:9945"/>
        <dbReference type="ChEBI" id="CHEBI:15377"/>
        <dbReference type="ChEBI" id="CHEBI:78784"/>
        <dbReference type="ChEBI" id="CHEBI:78827"/>
        <dbReference type="EC" id="4.2.1.59"/>
    </reaction>
</comment>
<comment type="subcellular location">
    <subcellularLocation>
        <location evidence="1">Cytoplasm</location>
    </subcellularLocation>
</comment>
<comment type="similarity">
    <text evidence="1">Belongs to the thioester dehydratase family. FabZ subfamily.</text>
</comment>
<evidence type="ECO:0000255" key="1">
    <source>
        <dbReference type="HAMAP-Rule" id="MF_00406"/>
    </source>
</evidence>
<keyword id="KW-0963">Cytoplasm</keyword>
<keyword id="KW-0441">Lipid A biosynthesis</keyword>
<keyword id="KW-0444">Lipid biosynthesis</keyword>
<keyword id="KW-0443">Lipid metabolism</keyword>
<keyword id="KW-0456">Lyase</keyword>
<keyword id="KW-1185">Reference proteome</keyword>
<accession>Q7MAS2</accession>
<feature type="chain" id="PRO_0000091762" description="3-hydroxyacyl-[acyl-carrier-protein] dehydratase FabZ">
    <location>
        <begin position="1"/>
        <end position="151"/>
    </location>
</feature>
<feature type="active site" evidence="1">
    <location>
        <position position="49"/>
    </location>
</feature>
<gene>
    <name evidence="1" type="primary">fabZ</name>
    <name type="ordered locus">WS0060</name>
</gene>
<name>FABZ_WOLSU</name>
<organism>
    <name type="scientific">Wolinella succinogenes (strain ATCC 29543 / DSM 1740 / CCUG 13145 / JCM 31913 / LMG 7466 / NCTC 11488 / FDC 602W)</name>
    <name type="common">Vibrio succinogenes</name>
    <dbReference type="NCBI Taxonomy" id="273121"/>
    <lineage>
        <taxon>Bacteria</taxon>
        <taxon>Pseudomonadati</taxon>
        <taxon>Campylobacterota</taxon>
        <taxon>Epsilonproteobacteria</taxon>
        <taxon>Campylobacterales</taxon>
        <taxon>Helicobacteraceae</taxon>
        <taxon>Wolinella</taxon>
    </lineage>
</organism>